<comment type="function">
    <text evidence="1">Endonuclease that specifically degrades the RNA of RNA-DNA hybrids.</text>
</comment>
<comment type="catalytic activity">
    <reaction evidence="1">
        <text>Endonucleolytic cleavage to 5'-phosphomonoester.</text>
        <dbReference type="EC" id="3.1.26.4"/>
    </reaction>
</comment>
<comment type="cofactor">
    <cofactor evidence="1">
        <name>Mn(2+)</name>
        <dbReference type="ChEBI" id="CHEBI:29035"/>
    </cofactor>
    <cofactor evidence="1">
        <name>Mg(2+)</name>
        <dbReference type="ChEBI" id="CHEBI:18420"/>
    </cofactor>
    <text evidence="1">Manganese or magnesium. Binds 1 divalent metal ion per monomer in the absence of substrate. May bind a second metal ion after substrate binding.</text>
</comment>
<comment type="subcellular location">
    <subcellularLocation>
        <location evidence="1">Cytoplasm</location>
    </subcellularLocation>
</comment>
<comment type="similarity">
    <text evidence="1">Belongs to the RNase HII family. RnhC subfamily.</text>
</comment>
<protein>
    <recommendedName>
        <fullName evidence="1">Ribonuclease HIII</fullName>
        <shortName evidence="1">RNase HIII</shortName>
        <ecNumber evidence="1">3.1.26.4</ecNumber>
    </recommendedName>
</protein>
<dbReference type="EC" id="3.1.26.4" evidence="1"/>
<dbReference type="EMBL" id="AE015929">
    <property type="protein sequence ID" value="AAO04430.1"/>
    <property type="molecule type" value="Genomic_DNA"/>
</dbReference>
<dbReference type="RefSeq" id="NP_764388.1">
    <property type="nucleotide sequence ID" value="NC_004461.1"/>
</dbReference>
<dbReference type="RefSeq" id="WP_002485123.1">
    <property type="nucleotide sequence ID" value="NZ_WBME01000035.1"/>
</dbReference>
<dbReference type="SMR" id="Q8CPL8"/>
<dbReference type="GeneID" id="50019029"/>
<dbReference type="KEGG" id="sep:SE_0833"/>
<dbReference type="PATRIC" id="fig|176280.10.peg.806"/>
<dbReference type="eggNOG" id="COG1039">
    <property type="taxonomic scope" value="Bacteria"/>
</dbReference>
<dbReference type="HOGENOM" id="CLU_059546_1_0_9"/>
<dbReference type="OrthoDB" id="9777935at2"/>
<dbReference type="Proteomes" id="UP000001411">
    <property type="component" value="Chromosome"/>
</dbReference>
<dbReference type="GO" id="GO:0005737">
    <property type="term" value="C:cytoplasm"/>
    <property type="evidence" value="ECO:0007669"/>
    <property type="project" value="UniProtKB-SubCell"/>
</dbReference>
<dbReference type="GO" id="GO:0032299">
    <property type="term" value="C:ribonuclease H2 complex"/>
    <property type="evidence" value="ECO:0007669"/>
    <property type="project" value="TreeGrafter"/>
</dbReference>
<dbReference type="GO" id="GO:0000287">
    <property type="term" value="F:magnesium ion binding"/>
    <property type="evidence" value="ECO:0007669"/>
    <property type="project" value="UniProtKB-UniRule"/>
</dbReference>
<dbReference type="GO" id="GO:0003723">
    <property type="term" value="F:RNA binding"/>
    <property type="evidence" value="ECO:0007669"/>
    <property type="project" value="InterPro"/>
</dbReference>
<dbReference type="GO" id="GO:0004523">
    <property type="term" value="F:RNA-DNA hybrid ribonuclease activity"/>
    <property type="evidence" value="ECO:0007669"/>
    <property type="project" value="UniProtKB-UniRule"/>
</dbReference>
<dbReference type="GO" id="GO:0043137">
    <property type="term" value="P:DNA replication, removal of RNA primer"/>
    <property type="evidence" value="ECO:0007669"/>
    <property type="project" value="TreeGrafter"/>
</dbReference>
<dbReference type="GO" id="GO:0006298">
    <property type="term" value="P:mismatch repair"/>
    <property type="evidence" value="ECO:0007669"/>
    <property type="project" value="TreeGrafter"/>
</dbReference>
<dbReference type="CDD" id="cd06590">
    <property type="entry name" value="RNase_HII_bacteria_HIII_like"/>
    <property type="match status" value="1"/>
</dbReference>
<dbReference type="CDD" id="cd14796">
    <property type="entry name" value="RNAse_HIII_N"/>
    <property type="match status" value="1"/>
</dbReference>
<dbReference type="FunFam" id="3.30.420.10:FF:000047">
    <property type="entry name" value="Ribonuclease HIII"/>
    <property type="match status" value="1"/>
</dbReference>
<dbReference type="Gene3D" id="3.30.420.10">
    <property type="entry name" value="Ribonuclease H-like superfamily/Ribonuclease H"/>
    <property type="match status" value="1"/>
</dbReference>
<dbReference type="Gene3D" id="3.30.310.10">
    <property type="entry name" value="TATA-Binding Protein"/>
    <property type="match status" value="1"/>
</dbReference>
<dbReference type="HAMAP" id="MF_00053">
    <property type="entry name" value="RNase_HIII"/>
    <property type="match status" value="1"/>
</dbReference>
<dbReference type="InterPro" id="IPR001352">
    <property type="entry name" value="RNase_HII/HIII"/>
</dbReference>
<dbReference type="InterPro" id="IPR024567">
    <property type="entry name" value="RNase_HII/HIII_dom"/>
</dbReference>
<dbReference type="InterPro" id="IPR004641">
    <property type="entry name" value="RNase_HIII"/>
</dbReference>
<dbReference type="InterPro" id="IPR024568">
    <property type="entry name" value="RNase_HIII_N"/>
</dbReference>
<dbReference type="InterPro" id="IPR012337">
    <property type="entry name" value="RNaseH-like_sf"/>
</dbReference>
<dbReference type="InterPro" id="IPR036397">
    <property type="entry name" value="RNaseH_sf"/>
</dbReference>
<dbReference type="InterPro" id="IPR012295">
    <property type="entry name" value="TBP_dom_sf"/>
</dbReference>
<dbReference type="NCBIfam" id="TIGR00716">
    <property type="entry name" value="rnhC"/>
    <property type="match status" value="1"/>
</dbReference>
<dbReference type="PANTHER" id="PTHR10954:SF23">
    <property type="entry name" value="RIBONUCLEASE"/>
    <property type="match status" value="1"/>
</dbReference>
<dbReference type="PANTHER" id="PTHR10954">
    <property type="entry name" value="RIBONUCLEASE H2 SUBUNIT A"/>
    <property type="match status" value="1"/>
</dbReference>
<dbReference type="Pfam" id="PF11858">
    <property type="entry name" value="DUF3378"/>
    <property type="match status" value="1"/>
</dbReference>
<dbReference type="Pfam" id="PF01351">
    <property type="entry name" value="RNase_HII"/>
    <property type="match status" value="1"/>
</dbReference>
<dbReference type="PIRSF" id="PIRSF037748">
    <property type="entry name" value="RnhC"/>
    <property type="match status" value="1"/>
</dbReference>
<dbReference type="SUPFAM" id="SSF53098">
    <property type="entry name" value="Ribonuclease H-like"/>
    <property type="match status" value="1"/>
</dbReference>
<dbReference type="PROSITE" id="PS51975">
    <property type="entry name" value="RNASE_H_2"/>
    <property type="match status" value="1"/>
</dbReference>
<reference key="1">
    <citation type="journal article" date="2003" name="Mol. Microbiol.">
        <title>Genome-based analysis of virulence genes in a non-biofilm-forming Staphylococcus epidermidis strain (ATCC 12228).</title>
        <authorList>
            <person name="Zhang Y.-Q."/>
            <person name="Ren S.-X."/>
            <person name="Li H.-L."/>
            <person name="Wang Y.-X."/>
            <person name="Fu G."/>
            <person name="Yang J."/>
            <person name="Qin Z.-Q."/>
            <person name="Miao Y.-G."/>
            <person name="Wang W.-Y."/>
            <person name="Chen R.-S."/>
            <person name="Shen Y."/>
            <person name="Chen Z."/>
            <person name="Yuan Z.-H."/>
            <person name="Zhao G.-P."/>
            <person name="Qu D."/>
            <person name="Danchin A."/>
            <person name="Wen Y.-M."/>
        </authorList>
    </citation>
    <scope>NUCLEOTIDE SEQUENCE [LARGE SCALE GENOMIC DNA]</scope>
    <source>
        <strain>ATCC 12228 / FDA PCI 1200</strain>
    </source>
</reference>
<keyword id="KW-0963">Cytoplasm</keyword>
<keyword id="KW-0255">Endonuclease</keyword>
<keyword id="KW-0378">Hydrolase</keyword>
<keyword id="KW-0460">Magnesium</keyword>
<keyword id="KW-0479">Metal-binding</keyword>
<keyword id="KW-0540">Nuclease</keyword>
<sequence>MGNVVYKLTSKEIQSLMAQTTFETTKLPQGMKARTRYQNTVINIYSSGKVMFQGKNADQLASQLLPDKQSTTGKHTSSNTTSIQYNRFHCIGSDEAGSGDYFGPLTVCAAYVSQSHIKILKELGVDDSKKLNDTKIVDLAEQLITFIPHSLLTLDNVKYNERQSIGWSQVKMKAVLHNEAIKNVLQKIEQDQLDYIVIDQFAKREVYQHYALSALPFPDKTKFETKGESKSLAIAVASIISRYAFVKHMDHISKKLHMEIPKGASNKVDLIAAKVIQKYDIQQLDTISKKHFKNRDKAIHLMNQKYNK</sequence>
<organism>
    <name type="scientific">Staphylococcus epidermidis (strain ATCC 12228 / FDA PCI 1200)</name>
    <dbReference type="NCBI Taxonomy" id="176280"/>
    <lineage>
        <taxon>Bacteria</taxon>
        <taxon>Bacillati</taxon>
        <taxon>Bacillota</taxon>
        <taxon>Bacilli</taxon>
        <taxon>Bacillales</taxon>
        <taxon>Staphylococcaceae</taxon>
        <taxon>Staphylococcus</taxon>
    </lineage>
</organism>
<gene>
    <name evidence="1" type="primary">rnhC</name>
    <name type="ordered locus">SE_0833</name>
</gene>
<accession>Q8CPL8</accession>
<name>RNH3_STAES</name>
<feature type="chain" id="PRO_0000111697" description="Ribonuclease HIII">
    <location>
        <begin position="1"/>
        <end position="308"/>
    </location>
</feature>
<feature type="domain" description="RNase H type-2" evidence="2">
    <location>
        <begin position="88"/>
        <end position="304"/>
    </location>
</feature>
<feature type="binding site" evidence="1">
    <location>
        <position position="94"/>
    </location>
    <ligand>
        <name>a divalent metal cation</name>
        <dbReference type="ChEBI" id="CHEBI:60240"/>
    </ligand>
</feature>
<feature type="binding site" evidence="1">
    <location>
        <position position="95"/>
    </location>
    <ligand>
        <name>a divalent metal cation</name>
        <dbReference type="ChEBI" id="CHEBI:60240"/>
    </ligand>
</feature>
<feature type="binding site" evidence="1">
    <location>
        <position position="199"/>
    </location>
    <ligand>
        <name>a divalent metal cation</name>
        <dbReference type="ChEBI" id="CHEBI:60240"/>
    </ligand>
</feature>
<proteinExistence type="inferred from homology"/>
<evidence type="ECO:0000255" key="1">
    <source>
        <dbReference type="HAMAP-Rule" id="MF_00053"/>
    </source>
</evidence>
<evidence type="ECO:0000255" key="2">
    <source>
        <dbReference type="PROSITE-ProRule" id="PRU01319"/>
    </source>
</evidence>